<name>SYK_MYCCT</name>
<accession>Q2SR35</accession>
<comment type="catalytic activity">
    <reaction evidence="1">
        <text>tRNA(Lys) + L-lysine + ATP = L-lysyl-tRNA(Lys) + AMP + diphosphate</text>
        <dbReference type="Rhea" id="RHEA:20792"/>
        <dbReference type="Rhea" id="RHEA-COMP:9696"/>
        <dbReference type="Rhea" id="RHEA-COMP:9697"/>
        <dbReference type="ChEBI" id="CHEBI:30616"/>
        <dbReference type="ChEBI" id="CHEBI:32551"/>
        <dbReference type="ChEBI" id="CHEBI:33019"/>
        <dbReference type="ChEBI" id="CHEBI:78442"/>
        <dbReference type="ChEBI" id="CHEBI:78529"/>
        <dbReference type="ChEBI" id="CHEBI:456215"/>
        <dbReference type="EC" id="6.1.1.6"/>
    </reaction>
</comment>
<comment type="cofactor">
    <cofactor evidence="1">
        <name>Mg(2+)</name>
        <dbReference type="ChEBI" id="CHEBI:18420"/>
    </cofactor>
    <text evidence="1">Binds 3 Mg(2+) ions per subunit.</text>
</comment>
<comment type="subunit">
    <text evidence="1">Homodimer.</text>
</comment>
<comment type="subcellular location">
    <subcellularLocation>
        <location evidence="1">Cytoplasm</location>
    </subcellularLocation>
</comment>
<comment type="similarity">
    <text evidence="1">Belongs to the class-II aminoacyl-tRNA synthetase family.</text>
</comment>
<evidence type="ECO:0000255" key="1">
    <source>
        <dbReference type="HAMAP-Rule" id="MF_00252"/>
    </source>
</evidence>
<dbReference type="EC" id="6.1.1.6" evidence="1"/>
<dbReference type="EMBL" id="CP000123">
    <property type="protein sequence ID" value="ABC01601.1"/>
    <property type="molecule type" value="Genomic_DNA"/>
</dbReference>
<dbReference type="SMR" id="Q2SR35"/>
<dbReference type="KEGG" id="mcp:MCAP_0836"/>
<dbReference type="HOGENOM" id="CLU_008255_6_0_14"/>
<dbReference type="PhylomeDB" id="Q2SR35"/>
<dbReference type="Proteomes" id="UP000001928">
    <property type="component" value="Chromosome"/>
</dbReference>
<dbReference type="GO" id="GO:0005829">
    <property type="term" value="C:cytosol"/>
    <property type="evidence" value="ECO:0007669"/>
    <property type="project" value="TreeGrafter"/>
</dbReference>
<dbReference type="GO" id="GO:0005524">
    <property type="term" value="F:ATP binding"/>
    <property type="evidence" value="ECO:0007669"/>
    <property type="project" value="UniProtKB-UniRule"/>
</dbReference>
<dbReference type="GO" id="GO:0004824">
    <property type="term" value="F:lysine-tRNA ligase activity"/>
    <property type="evidence" value="ECO:0007669"/>
    <property type="project" value="UniProtKB-UniRule"/>
</dbReference>
<dbReference type="GO" id="GO:0000287">
    <property type="term" value="F:magnesium ion binding"/>
    <property type="evidence" value="ECO:0007669"/>
    <property type="project" value="UniProtKB-UniRule"/>
</dbReference>
<dbReference type="GO" id="GO:0000049">
    <property type="term" value="F:tRNA binding"/>
    <property type="evidence" value="ECO:0007669"/>
    <property type="project" value="TreeGrafter"/>
</dbReference>
<dbReference type="GO" id="GO:0006430">
    <property type="term" value="P:lysyl-tRNA aminoacylation"/>
    <property type="evidence" value="ECO:0007669"/>
    <property type="project" value="UniProtKB-UniRule"/>
</dbReference>
<dbReference type="CDD" id="cd00775">
    <property type="entry name" value="LysRS_core"/>
    <property type="match status" value="1"/>
</dbReference>
<dbReference type="CDD" id="cd04322">
    <property type="entry name" value="LysRS_N"/>
    <property type="match status" value="1"/>
</dbReference>
<dbReference type="FunFam" id="2.40.50.140:FF:000024">
    <property type="entry name" value="Lysine--tRNA ligase"/>
    <property type="match status" value="1"/>
</dbReference>
<dbReference type="Gene3D" id="3.30.930.10">
    <property type="entry name" value="Bira Bifunctional Protein, Domain 2"/>
    <property type="match status" value="1"/>
</dbReference>
<dbReference type="Gene3D" id="2.40.50.140">
    <property type="entry name" value="Nucleic acid-binding proteins"/>
    <property type="match status" value="1"/>
</dbReference>
<dbReference type="HAMAP" id="MF_00252">
    <property type="entry name" value="Lys_tRNA_synth_class2"/>
    <property type="match status" value="1"/>
</dbReference>
<dbReference type="InterPro" id="IPR004364">
    <property type="entry name" value="Aa-tRNA-synt_II"/>
</dbReference>
<dbReference type="InterPro" id="IPR006195">
    <property type="entry name" value="aa-tRNA-synth_II"/>
</dbReference>
<dbReference type="InterPro" id="IPR045864">
    <property type="entry name" value="aa-tRNA-synth_II/BPL/LPL"/>
</dbReference>
<dbReference type="InterPro" id="IPR002313">
    <property type="entry name" value="Lys-tRNA-ligase_II"/>
</dbReference>
<dbReference type="InterPro" id="IPR044136">
    <property type="entry name" value="Lys-tRNA-ligase_II_N"/>
</dbReference>
<dbReference type="InterPro" id="IPR018149">
    <property type="entry name" value="Lys-tRNA-synth_II_C"/>
</dbReference>
<dbReference type="InterPro" id="IPR012340">
    <property type="entry name" value="NA-bd_OB-fold"/>
</dbReference>
<dbReference type="InterPro" id="IPR004365">
    <property type="entry name" value="NA-bd_OB_tRNA"/>
</dbReference>
<dbReference type="NCBIfam" id="TIGR00499">
    <property type="entry name" value="lysS_bact"/>
    <property type="match status" value="1"/>
</dbReference>
<dbReference type="NCBIfam" id="NF001756">
    <property type="entry name" value="PRK00484.1"/>
    <property type="match status" value="1"/>
</dbReference>
<dbReference type="PANTHER" id="PTHR42918:SF15">
    <property type="entry name" value="LYSINE--TRNA LIGASE, CHLOROPLASTIC_MITOCHONDRIAL"/>
    <property type="match status" value="1"/>
</dbReference>
<dbReference type="PANTHER" id="PTHR42918">
    <property type="entry name" value="LYSYL-TRNA SYNTHETASE"/>
    <property type="match status" value="1"/>
</dbReference>
<dbReference type="Pfam" id="PF00152">
    <property type="entry name" value="tRNA-synt_2"/>
    <property type="match status" value="1"/>
</dbReference>
<dbReference type="Pfam" id="PF01336">
    <property type="entry name" value="tRNA_anti-codon"/>
    <property type="match status" value="1"/>
</dbReference>
<dbReference type="PRINTS" id="PR00982">
    <property type="entry name" value="TRNASYNTHLYS"/>
</dbReference>
<dbReference type="SUPFAM" id="SSF55681">
    <property type="entry name" value="Class II aaRS and biotin synthetases"/>
    <property type="match status" value="1"/>
</dbReference>
<dbReference type="SUPFAM" id="SSF50249">
    <property type="entry name" value="Nucleic acid-binding proteins"/>
    <property type="match status" value="1"/>
</dbReference>
<dbReference type="PROSITE" id="PS50862">
    <property type="entry name" value="AA_TRNA_LIGASE_II"/>
    <property type="match status" value="1"/>
</dbReference>
<gene>
    <name evidence="1" type="primary">lysS</name>
    <name type="ordered locus">MCAP_0836</name>
</gene>
<keyword id="KW-0030">Aminoacyl-tRNA synthetase</keyword>
<keyword id="KW-0067">ATP-binding</keyword>
<keyword id="KW-0963">Cytoplasm</keyword>
<keyword id="KW-0436">Ligase</keyword>
<keyword id="KW-0460">Magnesium</keyword>
<keyword id="KW-0479">Metal-binding</keyword>
<keyword id="KW-0547">Nucleotide-binding</keyword>
<keyword id="KW-0648">Protein biosynthesis</keyword>
<sequence>MLDDRKFSEQELVRRNKYKNLVDQNKDPYKITNWKRNTTLLKLNEKYKDYSKEELLNLTQELVIVAGRIKLYREAGKKAAFVNIDDQDSSIQLYVRLDEIGQEAFEDFRDLDLGDIIGVKGNMMRTDHGELSIRCKEVVLLSKALRPLPDKHAGIQDIEEKYRRRYVDLIMNHDVRKTFQARTKIIRTMQNFLDNRGYMEVETPILHSLKGGASAKPFVTHYNVLNTDVYLRIATELHLKRLIVGGFEGVYEIGRIFRNEGMSTRHNPEFTSIELYVAYEDMFFLMDLTEEIFRVCNSAVNSSSVIEYNNVKIDLSKPFKRLHMVDGIKQVTGVDFWQEMTVEQALELAKKHNVYVEKHQESVGHIINLFYEEFVESTIVEPTFVYGHPKEISPLAKSNPNDPRFTDRFELFIIGREYANAFSELNDPIDQYERFKAQLEEESKGNDEANDMDIDFVEALEHAMPPTAGIGIGIDRLVMLLTNCDSIKDVLLFPQMKPKE</sequence>
<proteinExistence type="inferred from homology"/>
<feature type="chain" id="PRO_1000012893" description="Lysine--tRNA ligase">
    <location>
        <begin position="1"/>
        <end position="500"/>
    </location>
</feature>
<feature type="binding site" evidence="1">
    <location>
        <position position="410"/>
    </location>
    <ligand>
        <name>Mg(2+)</name>
        <dbReference type="ChEBI" id="CHEBI:18420"/>
        <label>1</label>
    </ligand>
</feature>
<feature type="binding site" evidence="1">
    <location>
        <position position="417"/>
    </location>
    <ligand>
        <name>Mg(2+)</name>
        <dbReference type="ChEBI" id="CHEBI:18420"/>
        <label>1</label>
    </ligand>
</feature>
<feature type="binding site" evidence="1">
    <location>
        <position position="417"/>
    </location>
    <ligand>
        <name>Mg(2+)</name>
        <dbReference type="ChEBI" id="CHEBI:18420"/>
        <label>2</label>
    </ligand>
</feature>
<protein>
    <recommendedName>
        <fullName evidence="1">Lysine--tRNA ligase</fullName>
        <ecNumber evidence="1">6.1.1.6</ecNumber>
    </recommendedName>
    <alternativeName>
        <fullName evidence="1">Lysyl-tRNA synthetase</fullName>
        <shortName evidence="1">LysRS</shortName>
    </alternativeName>
</protein>
<reference key="1">
    <citation type="submission" date="2005-09" db="EMBL/GenBank/DDBJ databases">
        <authorList>
            <person name="Glass J.I."/>
            <person name="Lartigue C."/>
            <person name="Pfannkoch C."/>
            <person name="Baden-Tillson H."/>
            <person name="Smith H.O."/>
            <person name="Venter J.C."/>
            <person name="Roske K."/>
            <person name="Wise K.S."/>
            <person name="Calcutt M.J."/>
            <person name="Nelson W.C."/>
            <person name="Nierman W.C."/>
        </authorList>
    </citation>
    <scope>NUCLEOTIDE SEQUENCE [LARGE SCALE GENOMIC DNA]</scope>
    <source>
        <strain>California kid / ATCC 27343 / NCTC 10154</strain>
    </source>
</reference>
<organism>
    <name type="scientific">Mycoplasma capricolum subsp. capricolum (strain California kid / ATCC 27343 / NCTC 10154)</name>
    <dbReference type="NCBI Taxonomy" id="340047"/>
    <lineage>
        <taxon>Bacteria</taxon>
        <taxon>Bacillati</taxon>
        <taxon>Mycoplasmatota</taxon>
        <taxon>Mollicutes</taxon>
        <taxon>Mycoplasmataceae</taxon>
        <taxon>Mycoplasma</taxon>
    </lineage>
</organism>